<accession>O22898</accession>
<accession>Q56WP3</accession>
<accession>Q56ZG8</accession>
<evidence type="ECO:0000250" key="1"/>
<evidence type="ECO:0000255" key="2"/>
<evidence type="ECO:0000269" key="3">
    <source>
    </source>
</evidence>
<evidence type="ECO:0000269" key="4">
    <source>
    </source>
</evidence>
<evidence type="ECO:0000269" key="5">
    <source>
    </source>
</evidence>
<evidence type="ECO:0000269" key="6">
    <source>
    </source>
</evidence>
<evidence type="ECO:0000305" key="7"/>
<organism>
    <name type="scientific">Arabidopsis thaliana</name>
    <name type="common">Mouse-ear cress</name>
    <dbReference type="NCBI Taxonomy" id="3702"/>
    <lineage>
        <taxon>Eukaryota</taxon>
        <taxon>Viridiplantae</taxon>
        <taxon>Streptophyta</taxon>
        <taxon>Embryophyta</taxon>
        <taxon>Tracheophyta</taxon>
        <taxon>Spermatophyta</taxon>
        <taxon>Magnoliopsida</taxon>
        <taxon>eudicotyledons</taxon>
        <taxon>Gunneridae</taxon>
        <taxon>Pentapetalae</taxon>
        <taxon>rosids</taxon>
        <taxon>malvids</taxon>
        <taxon>Brassicales</taxon>
        <taxon>Brassicaceae</taxon>
        <taxon>Camelineae</taxon>
        <taxon>Arabidopsis</taxon>
    </lineage>
</organism>
<reference key="1">
    <citation type="journal article" date="2002" name="Plant Physiol.">
        <title>Arabidopsis contains nine long-chain acyl-coenzyme A synthetase genes that participate in fatty acid and glycerolipid metabolism.</title>
        <authorList>
            <person name="Shockey J.M."/>
            <person name="Fulda M.S."/>
            <person name="Browse J.A."/>
        </authorList>
    </citation>
    <scope>NUCLEOTIDE SEQUENCE [MRNA]</scope>
    <scope>GENE FAMILY</scope>
    <scope>ENZYME ACTIVITY</scope>
</reference>
<reference key="2">
    <citation type="journal article" date="1999" name="Nature">
        <title>Sequence and analysis of chromosome 2 of the plant Arabidopsis thaliana.</title>
        <authorList>
            <person name="Lin X."/>
            <person name="Kaul S."/>
            <person name="Rounsley S.D."/>
            <person name="Shea T.P."/>
            <person name="Benito M.-I."/>
            <person name="Town C.D."/>
            <person name="Fujii C.Y."/>
            <person name="Mason T.M."/>
            <person name="Bowman C.L."/>
            <person name="Barnstead M.E."/>
            <person name="Feldblyum T.V."/>
            <person name="Buell C.R."/>
            <person name="Ketchum K.A."/>
            <person name="Lee J.J."/>
            <person name="Ronning C.M."/>
            <person name="Koo H.L."/>
            <person name="Moffat K.S."/>
            <person name="Cronin L.A."/>
            <person name="Shen M."/>
            <person name="Pai G."/>
            <person name="Van Aken S."/>
            <person name="Umayam L."/>
            <person name="Tallon L.J."/>
            <person name="Gill J.E."/>
            <person name="Adams M.D."/>
            <person name="Carrera A.J."/>
            <person name="Creasy T.H."/>
            <person name="Goodman H.M."/>
            <person name="Somerville C.R."/>
            <person name="Copenhaver G.P."/>
            <person name="Preuss D."/>
            <person name="Nierman W.C."/>
            <person name="White O."/>
            <person name="Eisen J.A."/>
            <person name="Salzberg S.L."/>
            <person name="Fraser C.M."/>
            <person name="Venter J.C."/>
        </authorList>
    </citation>
    <scope>NUCLEOTIDE SEQUENCE [LARGE SCALE GENOMIC DNA]</scope>
    <source>
        <strain>cv. Columbia</strain>
    </source>
</reference>
<reference key="3">
    <citation type="journal article" date="2017" name="Plant J.">
        <title>Araport11: a complete reannotation of the Arabidopsis thaliana reference genome.</title>
        <authorList>
            <person name="Cheng C.Y."/>
            <person name="Krishnakumar V."/>
            <person name="Chan A.P."/>
            <person name="Thibaud-Nissen F."/>
            <person name="Schobel S."/>
            <person name="Town C.D."/>
        </authorList>
    </citation>
    <scope>GENOME REANNOTATION</scope>
    <source>
        <strain>cv. Columbia</strain>
    </source>
</reference>
<reference key="4">
    <citation type="journal article" date="2003" name="Science">
        <title>Empirical analysis of transcriptional activity in the Arabidopsis genome.</title>
        <authorList>
            <person name="Yamada K."/>
            <person name="Lim J."/>
            <person name="Dale J.M."/>
            <person name="Chen H."/>
            <person name="Shinn P."/>
            <person name="Palm C.J."/>
            <person name="Southwick A.M."/>
            <person name="Wu H.C."/>
            <person name="Kim C.J."/>
            <person name="Nguyen M."/>
            <person name="Pham P.K."/>
            <person name="Cheuk R.F."/>
            <person name="Karlin-Newmann G."/>
            <person name="Liu S.X."/>
            <person name="Lam B."/>
            <person name="Sakano H."/>
            <person name="Wu T."/>
            <person name="Yu G."/>
            <person name="Miranda M."/>
            <person name="Quach H.L."/>
            <person name="Tripp M."/>
            <person name="Chang C.H."/>
            <person name="Lee J.M."/>
            <person name="Toriumi M.J."/>
            <person name="Chan M.M."/>
            <person name="Tang C.C."/>
            <person name="Onodera C.S."/>
            <person name="Deng J.M."/>
            <person name="Akiyama K."/>
            <person name="Ansari Y."/>
            <person name="Arakawa T."/>
            <person name="Banh J."/>
            <person name="Banno F."/>
            <person name="Bowser L."/>
            <person name="Brooks S.Y."/>
            <person name="Carninci P."/>
            <person name="Chao Q."/>
            <person name="Choy N."/>
            <person name="Enju A."/>
            <person name="Goldsmith A.D."/>
            <person name="Gurjal M."/>
            <person name="Hansen N.F."/>
            <person name="Hayashizaki Y."/>
            <person name="Johnson-Hopson C."/>
            <person name="Hsuan V.W."/>
            <person name="Iida K."/>
            <person name="Karnes M."/>
            <person name="Khan S."/>
            <person name="Koesema E."/>
            <person name="Ishida J."/>
            <person name="Jiang P.X."/>
            <person name="Jones T."/>
            <person name="Kawai J."/>
            <person name="Kamiya A."/>
            <person name="Meyers C."/>
            <person name="Nakajima M."/>
            <person name="Narusaka M."/>
            <person name="Seki M."/>
            <person name="Sakurai T."/>
            <person name="Satou M."/>
            <person name="Tamse R."/>
            <person name="Vaysberg M."/>
            <person name="Wallender E.K."/>
            <person name="Wong C."/>
            <person name="Yamamura Y."/>
            <person name="Yuan S."/>
            <person name="Shinozaki K."/>
            <person name="Davis R.W."/>
            <person name="Theologis A."/>
            <person name="Ecker J.R."/>
        </authorList>
    </citation>
    <scope>NUCLEOTIDE SEQUENCE [LARGE SCALE MRNA]</scope>
    <source>
        <strain>cv. Columbia</strain>
    </source>
</reference>
<reference key="5">
    <citation type="journal article" date="2009" name="DNA Res.">
        <title>Analysis of multiple occurrences of alternative splicing events in Arabidopsis thaliana using novel sequenced full-length cDNAs.</title>
        <authorList>
            <person name="Iida K."/>
            <person name="Fukami-Kobayashi K."/>
            <person name="Toyoda A."/>
            <person name="Sakaki Y."/>
            <person name="Kobayashi M."/>
            <person name="Seki M."/>
            <person name="Shinozaki K."/>
        </authorList>
    </citation>
    <scope>NUCLEOTIDE SEQUENCE [LARGE SCALE MRNA]</scope>
    <source>
        <strain>cv. Columbia</strain>
        <tissue>Flower</tissue>
        <tissue>Silique</tissue>
    </source>
</reference>
<reference key="6">
    <citation type="submission" date="2005-03" db="EMBL/GenBank/DDBJ databases">
        <title>Large-scale analysis of RIKEN Arabidopsis full-length (RAFL) cDNAs.</title>
        <authorList>
            <person name="Totoki Y."/>
            <person name="Seki M."/>
            <person name="Ishida J."/>
            <person name="Nakajima M."/>
            <person name="Enju A."/>
            <person name="Kamiya A."/>
            <person name="Narusaka M."/>
            <person name="Shin-i T."/>
            <person name="Nakagawa M."/>
            <person name="Sakamoto N."/>
            <person name="Oishi K."/>
            <person name="Kohara Y."/>
            <person name="Kobayashi M."/>
            <person name="Toyoda A."/>
            <person name="Sakaki Y."/>
            <person name="Sakurai T."/>
            <person name="Iida K."/>
            <person name="Akiyama K."/>
            <person name="Satou M."/>
            <person name="Toyoda T."/>
            <person name="Konagaya A."/>
            <person name="Carninci P."/>
            <person name="Kawai J."/>
            <person name="Hayashizaki Y."/>
            <person name="Shinozaki K."/>
        </authorList>
    </citation>
    <scope>NUCLEOTIDE SEQUENCE [LARGE SCALE MRNA] OF 433-660</scope>
    <source>
        <strain>cv. Columbia</strain>
    </source>
</reference>
<reference key="7">
    <citation type="journal article" date="1995" name="Plant Physiol.">
        <title>Leaf epicuticular waxes of the eceriferum mutants in Arabidopsis.</title>
        <authorList>
            <person name="Jenks M.A."/>
            <person name="Tuttle H.A."/>
            <person name="Eigenbrode S.D."/>
            <person name="Feldmann K.A."/>
        </authorList>
    </citation>
    <scope>FUNCTION</scope>
</reference>
<reference key="8">
    <citation type="journal article" date="2003" name="Plant Physiol.">
        <title>Arabidopsis contains a large superfamily of acyl-activating enzymes. Phylogenetic and biochemical analysis reveals a new class of acyl-coenzyme a synthetases.</title>
        <authorList>
            <person name="Shockey J.M."/>
            <person name="Fulda M.S."/>
            <person name="Browse J."/>
        </authorList>
    </citation>
    <scope>GENE FAMILY ORGANIZATION</scope>
</reference>
<reference key="9">
    <citation type="journal article" date="2009" name="Plant J.">
        <title>Arabidopsis CER8 encodes LONG-CHAIN ACYL-COA SYNTHETASE 1 (LACS1) that has overlapping functions with LACS2 in plant wax and cutin synthesis.</title>
        <authorList>
            <person name="Lue S."/>
            <person name="Song T."/>
            <person name="Kosma D.K."/>
            <person name="Parsons E.P."/>
            <person name="Rowland O."/>
            <person name="Jenks M.A."/>
        </authorList>
    </citation>
    <scope>FUNCTION</scope>
    <scope>DISRUPTION PHENOTYPE</scope>
    <scope>TISSUE SPECIFICITY</scope>
</reference>
<reference key="10">
    <citation type="journal article" date="2010" name="Planta">
        <title>Organ fusion and defective cuticle function in a lacs1 lacs2 double mutant of Arabidopsis.</title>
        <authorList>
            <person name="Weng H."/>
            <person name="Molina I."/>
            <person name="Shockey J."/>
            <person name="Browse J."/>
        </authorList>
    </citation>
    <scope>FUNCTION</scope>
    <scope>DISRUPTION PHENOTYPE</scope>
    <scope>TISSUE SPECIFICITY</scope>
    <scope>SUBCELLULAR LOCATION</scope>
</reference>
<gene>
    <name type="primary">LACS1</name>
    <name type="synonym">CER8</name>
    <name type="ordered locus">At2g47240</name>
    <name type="ORF">T8I13.8</name>
</gene>
<protein>
    <recommendedName>
        <fullName>Long chain acyl-CoA synthetase 1</fullName>
        <ecNumber>6.2.1.3</ecNumber>
    </recommendedName>
    <alternativeName>
        <fullName>Protein ECERIFERUM 8</fullName>
    </alternativeName>
</protein>
<dbReference type="EC" id="6.2.1.3"/>
<dbReference type="EMBL" id="AF503751">
    <property type="protein sequence ID" value="AAM28868.1"/>
    <property type="molecule type" value="mRNA"/>
</dbReference>
<dbReference type="EMBL" id="AC002337">
    <property type="protein sequence ID" value="AAB63824.1"/>
    <property type="molecule type" value="Genomic_DNA"/>
</dbReference>
<dbReference type="EMBL" id="CP002685">
    <property type="protein sequence ID" value="AEC10818.1"/>
    <property type="molecule type" value="Genomic_DNA"/>
</dbReference>
<dbReference type="EMBL" id="CP002685">
    <property type="protein sequence ID" value="AEC10819.1"/>
    <property type="molecule type" value="Genomic_DNA"/>
</dbReference>
<dbReference type="EMBL" id="CP002685">
    <property type="protein sequence ID" value="ANM63045.1"/>
    <property type="molecule type" value="Genomic_DNA"/>
</dbReference>
<dbReference type="EMBL" id="AY056380">
    <property type="protein sequence ID" value="AAL08236.1"/>
    <property type="molecule type" value="mRNA"/>
</dbReference>
<dbReference type="EMBL" id="AY133648">
    <property type="protein sequence ID" value="AAM91478.1"/>
    <property type="molecule type" value="mRNA"/>
</dbReference>
<dbReference type="EMBL" id="AK317315">
    <property type="protein sequence ID" value="BAH19991.1"/>
    <property type="molecule type" value="mRNA"/>
</dbReference>
<dbReference type="EMBL" id="AK220997">
    <property type="protein sequence ID" value="BAD94634.1"/>
    <property type="molecule type" value="mRNA"/>
</dbReference>
<dbReference type="EMBL" id="AK221992">
    <property type="protein sequence ID" value="BAD94568.1"/>
    <property type="molecule type" value="mRNA"/>
</dbReference>
<dbReference type="PIR" id="G84912">
    <property type="entry name" value="G84912"/>
</dbReference>
<dbReference type="RefSeq" id="NP_001031554.1">
    <property type="nucleotide sequence ID" value="NM_001036477.1"/>
</dbReference>
<dbReference type="RefSeq" id="NP_001318440.1">
    <property type="nucleotide sequence ID" value="NM_001337254.1"/>
</dbReference>
<dbReference type="RefSeq" id="NP_182246.1">
    <property type="nucleotide sequence ID" value="NM_130292.4"/>
</dbReference>
<dbReference type="SMR" id="O22898"/>
<dbReference type="FunCoup" id="O22898">
    <property type="interactions" value="150"/>
</dbReference>
<dbReference type="STRING" id="3702.O22898"/>
<dbReference type="iPTMnet" id="O22898"/>
<dbReference type="PaxDb" id="3702-AT2G47240.1"/>
<dbReference type="ProteomicsDB" id="250728"/>
<dbReference type="EnsemblPlants" id="AT2G47240.1">
    <property type="protein sequence ID" value="AT2G47240.1"/>
    <property type="gene ID" value="AT2G47240"/>
</dbReference>
<dbReference type="EnsemblPlants" id="AT2G47240.2">
    <property type="protein sequence ID" value="AT2G47240.2"/>
    <property type="gene ID" value="AT2G47240"/>
</dbReference>
<dbReference type="EnsemblPlants" id="AT2G47240.3">
    <property type="protein sequence ID" value="AT2G47240.3"/>
    <property type="gene ID" value="AT2G47240"/>
</dbReference>
<dbReference type="GeneID" id="819337"/>
<dbReference type="Gramene" id="AT2G47240.1">
    <property type="protein sequence ID" value="AT2G47240.1"/>
    <property type="gene ID" value="AT2G47240"/>
</dbReference>
<dbReference type="Gramene" id="AT2G47240.2">
    <property type="protein sequence ID" value="AT2G47240.2"/>
    <property type="gene ID" value="AT2G47240"/>
</dbReference>
<dbReference type="Gramene" id="AT2G47240.3">
    <property type="protein sequence ID" value="AT2G47240.3"/>
    <property type="gene ID" value="AT2G47240"/>
</dbReference>
<dbReference type="KEGG" id="ath:AT2G47240"/>
<dbReference type="Araport" id="AT2G47240"/>
<dbReference type="TAIR" id="AT2G47240">
    <property type="gene designation" value="LACS1"/>
</dbReference>
<dbReference type="eggNOG" id="KOG1256">
    <property type="taxonomic scope" value="Eukaryota"/>
</dbReference>
<dbReference type="HOGENOM" id="CLU_000022_45_4_1"/>
<dbReference type="InParanoid" id="O22898"/>
<dbReference type="OMA" id="HADPEHS"/>
<dbReference type="PhylomeDB" id="O22898"/>
<dbReference type="BioCyc" id="ARA:AT2G47240-MONOMER"/>
<dbReference type="BioCyc" id="MetaCyc:AT2G47240-MONOMER"/>
<dbReference type="UniPathway" id="UPA00199"/>
<dbReference type="PRO" id="PR:O22898"/>
<dbReference type="Proteomes" id="UP000006548">
    <property type="component" value="Chromosome 2"/>
</dbReference>
<dbReference type="ExpressionAtlas" id="O22898">
    <property type="expression patterns" value="baseline and differential"/>
</dbReference>
<dbReference type="GO" id="GO:0005783">
    <property type="term" value="C:endoplasmic reticulum"/>
    <property type="evidence" value="ECO:0000314"/>
    <property type="project" value="UniProtKB"/>
</dbReference>
<dbReference type="GO" id="GO:0005524">
    <property type="term" value="F:ATP binding"/>
    <property type="evidence" value="ECO:0007669"/>
    <property type="project" value="UniProtKB-KW"/>
</dbReference>
<dbReference type="GO" id="GO:0004467">
    <property type="term" value="F:long-chain fatty acid-CoA ligase activity"/>
    <property type="evidence" value="ECO:0000314"/>
    <property type="project" value="UniProtKB"/>
</dbReference>
<dbReference type="GO" id="GO:0031957">
    <property type="term" value="F:very long-chain fatty acid-CoA ligase activity"/>
    <property type="evidence" value="ECO:0000314"/>
    <property type="project" value="TAIR"/>
</dbReference>
<dbReference type="GO" id="GO:0010143">
    <property type="term" value="P:cutin biosynthetic process"/>
    <property type="evidence" value="ECO:0000315"/>
    <property type="project" value="TAIR"/>
</dbReference>
<dbReference type="GO" id="GO:0006631">
    <property type="term" value="P:fatty acid metabolic process"/>
    <property type="evidence" value="ECO:0000304"/>
    <property type="project" value="UniProtKB"/>
</dbReference>
<dbReference type="GO" id="GO:0010025">
    <property type="term" value="P:wax biosynthetic process"/>
    <property type="evidence" value="ECO:0000315"/>
    <property type="project" value="TAIR"/>
</dbReference>
<dbReference type="CDD" id="cd05927">
    <property type="entry name" value="LC-FACS_euk"/>
    <property type="match status" value="1"/>
</dbReference>
<dbReference type="Gene3D" id="3.40.50.12780">
    <property type="entry name" value="N-terminal domain of ligase-like"/>
    <property type="match status" value="1"/>
</dbReference>
<dbReference type="InterPro" id="IPR020845">
    <property type="entry name" value="AMP-binding_CS"/>
</dbReference>
<dbReference type="InterPro" id="IPR000873">
    <property type="entry name" value="AMP-dep_synth/lig_dom"/>
</dbReference>
<dbReference type="InterPro" id="IPR042099">
    <property type="entry name" value="ANL_N_sf"/>
</dbReference>
<dbReference type="InterPro" id="IPR045311">
    <property type="entry name" value="LC-FACS_euk"/>
</dbReference>
<dbReference type="PANTHER" id="PTHR43272:SF6">
    <property type="entry name" value="LONG CHAIN ACYL-COA SYNTHETASE 1"/>
    <property type="match status" value="1"/>
</dbReference>
<dbReference type="PANTHER" id="PTHR43272">
    <property type="entry name" value="LONG-CHAIN-FATTY-ACID--COA LIGASE"/>
    <property type="match status" value="1"/>
</dbReference>
<dbReference type="Pfam" id="PF00501">
    <property type="entry name" value="AMP-binding"/>
    <property type="match status" value="1"/>
</dbReference>
<dbReference type="SUPFAM" id="SSF56801">
    <property type="entry name" value="Acetyl-CoA synthetase-like"/>
    <property type="match status" value="1"/>
</dbReference>
<dbReference type="PROSITE" id="PS00455">
    <property type="entry name" value="AMP_BINDING"/>
    <property type="match status" value="1"/>
</dbReference>
<keyword id="KW-0067">ATP-binding</keyword>
<keyword id="KW-0256">Endoplasmic reticulum</keyword>
<keyword id="KW-0276">Fatty acid metabolism</keyword>
<keyword id="KW-0436">Ligase</keyword>
<keyword id="KW-0443">Lipid metabolism</keyword>
<keyword id="KW-0460">Magnesium</keyword>
<keyword id="KW-0547">Nucleotide-binding</keyword>
<keyword id="KW-1185">Reference proteome</keyword>
<name>LACS1_ARATH</name>
<feature type="chain" id="PRO_0000401409" description="Long chain acyl-CoA synthetase 1">
    <location>
        <begin position="1"/>
        <end position="660"/>
    </location>
</feature>
<feature type="region of interest" description="Fatty acid-binding" evidence="2">
    <location>
        <begin position="492"/>
        <end position="516"/>
    </location>
</feature>
<feature type="binding site" evidence="2">
    <location>
        <begin position="225"/>
        <end position="236"/>
    </location>
    <ligand>
        <name>ATP</name>
        <dbReference type="ChEBI" id="CHEBI:30616"/>
    </ligand>
</feature>
<feature type="sequence conflict" description="In Ref. 6; BAD94568." evidence="7" ref="6">
    <original>M</original>
    <variation>L</variation>
    <location>
        <position position="434"/>
    </location>
</feature>
<comment type="function">
    <text evidence="4 5 6">Activation of long-chain fatty acids for both synthesis of cellular lipids, and degradation via beta-oxidation. Acts in both the wax and cutin pathways. Preferentially uses palmitate, palmitoleate, linoleate and eicosenoate. Seems to have a specific activity against very long-chain fatty acid (VLCFA) class with acids longer than 24 carbons (C(24)).</text>
</comment>
<comment type="catalytic activity">
    <reaction evidence="3">
        <text>a long-chain fatty acid + ATP + CoA = a long-chain fatty acyl-CoA + AMP + diphosphate</text>
        <dbReference type="Rhea" id="RHEA:15421"/>
        <dbReference type="ChEBI" id="CHEBI:30616"/>
        <dbReference type="ChEBI" id="CHEBI:33019"/>
        <dbReference type="ChEBI" id="CHEBI:57287"/>
        <dbReference type="ChEBI" id="CHEBI:57560"/>
        <dbReference type="ChEBI" id="CHEBI:83139"/>
        <dbReference type="ChEBI" id="CHEBI:456215"/>
        <dbReference type="EC" id="6.2.1.3"/>
    </reaction>
</comment>
<comment type="cofactor">
    <cofactor evidence="1">
        <name>Mg(2+)</name>
        <dbReference type="ChEBI" id="CHEBI:18420"/>
    </cofactor>
</comment>
<comment type="pathway">
    <text>Lipid metabolism; fatty acid metabolism.</text>
</comment>
<comment type="subcellular location">
    <subcellularLocation>
        <location evidence="6">Endoplasmic reticulum</location>
    </subcellularLocation>
</comment>
<comment type="tissue specificity">
    <text evidence="5 6">Epidermal-specific expression along the entire stem. In cauline leaves, was expressed over the entire leaf surface, most strongly in trichomes and guard cells, but not in mesophyll cells. In flowers, the expression was detected in the stigma and filaments of the stamens, and in the carpel was expressed specifically in ovaries. In roots, was expressed in primary and lateral roots, but not in the root tips.</text>
</comment>
<comment type="disruption phenotype">
    <text evidence="5 6">In stem, fewer and flatter wax crystals and disorganized cuticle proper and thinner cuticular layer. Reduced amount of wax in all chemical classes on the stem and leaf, except in the very long-chain fatty acid (VLCFA) class with acids longer than 24 carbons (C(24)).</text>
</comment>
<comment type="similarity">
    <text evidence="7">Belongs to the ATP-dependent AMP-binding enzyme family.</text>
</comment>
<proteinExistence type="evidence at transcript level"/>
<sequence>MKSFAAKVEEGVKGIDGKPSVGPVYRNLLSEKGFPPIDSEITTAWDIFSKSVEKFPDNNMLGWRRIVDEKVGPYMWKTYKEVYEEVLQIGSALRAAGAEPGSRVGIYGVNCPQWIIAMEACAAHTLICVPLYDTLGSGAVDYIVEHAEIDFVFVQDTKIKGLLEPDCKCAKRLKAIVSFTNVSDELSHKASEIGVKTYSWIDFLHMGREKPEDTNPPKAFNICTIMYTSGTSGDPKGVVLTHQAVATFVVGMDLYMDQFEDKMTHDDVYLSFLPLAHILDRMNEEYFFRKGASVGYYHGNLNVLRDDIQELKPTYLAGVPRVFERIHEGIQKALQELNPRRRFIFNALYKHKLAWLNRGYSHSKASPMADFIAFRKIRDKLGGRIRLLVSGGAPLSPEIEEFLRVTCCCFVVQGYGLTETLGGTALGFPDEMCMLGTVGIPAVYNEIRLEEVSEMGYDPLGENPAGEICIRGQCMFSGYYKNPELTEEVMKDGWFHTGDIGEILPNGVLKIIDRKKNLIKLSQGEYVALEHLENIFGQNSVVQDIWVYGDSFKSMLVAVVVPNPETVNRWAKDLGFTKPFEELCSFPELKEHIISELKSTAEKNKLRKFEYIKAVTVETKPFDVERDLVTATLKNRRNNLLKYYQVQIDEMYRKLASKKI</sequence>